<organism>
    <name type="scientific">Verminephrobacter eiseniae (strain EF01-2)</name>
    <dbReference type="NCBI Taxonomy" id="391735"/>
    <lineage>
        <taxon>Bacteria</taxon>
        <taxon>Pseudomonadati</taxon>
        <taxon>Pseudomonadota</taxon>
        <taxon>Betaproteobacteria</taxon>
        <taxon>Burkholderiales</taxon>
        <taxon>Comamonadaceae</taxon>
        <taxon>Verminephrobacter</taxon>
    </lineage>
</organism>
<feature type="chain" id="PRO_0000325477" description="Anthranilate phosphoribosyltransferase">
    <location>
        <begin position="1"/>
        <end position="342"/>
    </location>
</feature>
<feature type="binding site" evidence="1">
    <location>
        <position position="84"/>
    </location>
    <ligand>
        <name>5-phospho-alpha-D-ribose 1-diphosphate</name>
        <dbReference type="ChEBI" id="CHEBI:58017"/>
    </ligand>
</feature>
<feature type="binding site" evidence="1">
    <location>
        <position position="84"/>
    </location>
    <ligand>
        <name>anthranilate</name>
        <dbReference type="ChEBI" id="CHEBI:16567"/>
        <label>1</label>
    </ligand>
</feature>
<feature type="binding site" evidence="1">
    <location>
        <begin position="87"/>
        <end position="88"/>
    </location>
    <ligand>
        <name>5-phospho-alpha-D-ribose 1-diphosphate</name>
        <dbReference type="ChEBI" id="CHEBI:58017"/>
    </ligand>
</feature>
<feature type="binding site" evidence="1">
    <location>
        <position position="92"/>
    </location>
    <ligand>
        <name>5-phospho-alpha-D-ribose 1-diphosphate</name>
        <dbReference type="ChEBI" id="CHEBI:58017"/>
    </ligand>
</feature>
<feature type="binding site" evidence="1">
    <location>
        <begin position="94"/>
        <end position="97"/>
    </location>
    <ligand>
        <name>5-phospho-alpha-D-ribose 1-diphosphate</name>
        <dbReference type="ChEBI" id="CHEBI:58017"/>
    </ligand>
</feature>
<feature type="binding site" evidence="1">
    <location>
        <position position="96"/>
    </location>
    <ligand>
        <name>Mg(2+)</name>
        <dbReference type="ChEBI" id="CHEBI:18420"/>
        <label>1</label>
    </ligand>
</feature>
<feature type="binding site" evidence="1">
    <location>
        <begin position="112"/>
        <end position="120"/>
    </location>
    <ligand>
        <name>5-phospho-alpha-D-ribose 1-diphosphate</name>
        <dbReference type="ChEBI" id="CHEBI:58017"/>
    </ligand>
</feature>
<feature type="binding site" evidence="1">
    <location>
        <position position="124"/>
    </location>
    <ligand>
        <name>5-phospho-alpha-D-ribose 1-diphosphate</name>
        <dbReference type="ChEBI" id="CHEBI:58017"/>
    </ligand>
</feature>
<feature type="binding site" evidence="1">
    <location>
        <position position="170"/>
    </location>
    <ligand>
        <name>anthranilate</name>
        <dbReference type="ChEBI" id="CHEBI:16567"/>
        <label>2</label>
    </ligand>
</feature>
<feature type="binding site" evidence="1">
    <location>
        <position position="229"/>
    </location>
    <ligand>
        <name>Mg(2+)</name>
        <dbReference type="ChEBI" id="CHEBI:18420"/>
        <label>2</label>
    </ligand>
</feature>
<feature type="binding site" evidence="1">
    <location>
        <position position="230"/>
    </location>
    <ligand>
        <name>Mg(2+)</name>
        <dbReference type="ChEBI" id="CHEBI:18420"/>
        <label>1</label>
    </ligand>
</feature>
<feature type="binding site" evidence="1">
    <location>
        <position position="230"/>
    </location>
    <ligand>
        <name>Mg(2+)</name>
        <dbReference type="ChEBI" id="CHEBI:18420"/>
        <label>2</label>
    </ligand>
</feature>
<reference key="1">
    <citation type="submission" date="2006-12" db="EMBL/GenBank/DDBJ databases">
        <title>Complete sequence of chromosome 1 of Verminephrobacter eiseniae EF01-2.</title>
        <authorList>
            <person name="Copeland A."/>
            <person name="Lucas S."/>
            <person name="Lapidus A."/>
            <person name="Barry K."/>
            <person name="Detter J.C."/>
            <person name="Glavina del Rio T."/>
            <person name="Dalin E."/>
            <person name="Tice H."/>
            <person name="Pitluck S."/>
            <person name="Chertkov O."/>
            <person name="Brettin T."/>
            <person name="Bruce D."/>
            <person name="Han C."/>
            <person name="Tapia R."/>
            <person name="Gilna P."/>
            <person name="Schmutz J."/>
            <person name="Larimer F."/>
            <person name="Land M."/>
            <person name="Hauser L."/>
            <person name="Kyrpides N."/>
            <person name="Kim E."/>
            <person name="Stahl D."/>
            <person name="Richardson P."/>
        </authorList>
    </citation>
    <scope>NUCLEOTIDE SEQUENCE [LARGE SCALE GENOMIC DNA]</scope>
    <source>
        <strain>EF01-2</strain>
    </source>
</reference>
<gene>
    <name evidence="1" type="primary">trpD</name>
    <name type="ordered locus">Veis_1210</name>
</gene>
<accession>A1WH74</accession>
<comment type="function">
    <text evidence="1">Catalyzes the transfer of the phosphoribosyl group of 5-phosphorylribose-1-pyrophosphate (PRPP) to anthranilate to yield N-(5'-phosphoribosyl)-anthranilate (PRA).</text>
</comment>
<comment type="catalytic activity">
    <reaction evidence="1">
        <text>N-(5-phospho-beta-D-ribosyl)anthranilate + diphosphate = 5-phospho-alpha-D-ribose 1-diphosphate + anthranilate</text>
        <dbReference type="Rhea" id="RHEA:11768"/>
        <dbReference type="ChEBI" id="CHEBI:16567"/>
        <dbReference type="ChEBI" id="CHEBI:18277"/>
        <dbReference type="ChEBI" id="CHEBI:33019"/>
        <dbReference type="ChEBI" id="CHEBI:58017"/>
        <dbReference type="EC" id="2.4.2.18"/>
    </reaction>
</comment>
<comment type="cofactor">
    <cofactor evidence="1">
        <name>Mg(2+)</name>
        <dbReference type="ChEBI" id="CHEBI:18420"/>
    </cofactor>
    <text evidence="1">Binds 2 magnesium ions per monomer.</text>
</comment>
<comment type="pathway">
    <text evidence="1">Amino-acid biosynthesis; L-tryptophan biosynthesis; L-tryptophan from chorismate: step 2/5.</text>
</comment>
<comment type="subunit">
    <text evidence="1">Homodimer.</text>
</comment>
<comment type="similarity">
    <text evidence="1">Belongs to the anthranilate phosphoribosyltransferase family.</text>
</comment>
<comment type="sequence caution" evidence="2">
    <conflict type="erroneous initiation">
        <sequence resource="EMBL-CDS" id="ABM56981"/>
    </conflict>
    <text>Extended N-terminus.</text>
</comment>
<keyword id="KW-0028">Amino-acid biosynthesis</keyword>
<keyword id="KW-0057">Aromatic amino acid biosynthesis</keyword>
<keyword id="KW-0328">Glycosyltransferase</keyword>
<keyword id="KW-0460">Magnesium</keyword>
<keyword id="KW-0479">Metal-binding</keyword>
<keyword id="KW-1185">Reference proteome</keyword>
<keyword id="KW-0808">Transferase</keyword>
<keyword id="KW-0822">Tryptophan biosynthesis</keyword>
<protein>
    <recommendedName>
        <fullName evidence="1">Anthranilate phosphoribosyltransferase</fullName>
        <ecNumber evidence="1">2.4.2.18</ecNumber>
    </recommendedName>
</protein>
<name>TRPD_VEREI</name>
<evidence type="ECO:0000255" key="1">
    <source>
        <dbReference type="HAMAP-Rule" id="MF_00211"/>
    </source>
</evidence>
<evidence type="ECO:0000305" key="2"/>
<dbReference type="EC" id="2.4.2.18" evidence="1"/>
<dbReference type="EMBL" id="CP000542">
    <property type="protein sequence ID" value="ABM56981.1"/>
    <property type="status" value="ALT_INIT"/>
    <property type="molecule type" value="Genomic_DNA"/>
</dbReference>
<dbReference type="RefSeq" id="WP_041950579.1">
    <property type="nucleotide sequence ID" value="NC_008786.1"/>
</dbReference>
<dbReference type="SMR" id="A1WH74"/>
<dbReference type="STRING" id="391735.Veis_1210"/>
<dbReference type="GeneID" id="76459862"/>
<dbReference type="KEGG" id="vei:Veis_1210"/>
<dbReference type="eggNOG" id="COG0547">
    <property type="taxonomic scope" value="Bacteria"/>
</dbReference>
<dbReference type="HOGENOM" id="CLU_034315_2_1_4"/>
<dbReference type="OrthoDB" id="9806430at2"/>
<dbReference type="UniPathway" id="UPA00035">
    <property type="reaction ID" value="UER00041"/>
</dbReference>
<dbReference type="Proteomes" id="UP000000374">
    <property type="component" value="Chromosome"/>
</dbReference>
<dbReference type="GO" id="GO:0005829">
    <property type="term" value="C:cytosol"/>
    <property type="evidence" value="ECO:0007669"/>
    <property type="project" value="TreeGrafter"/>
</dbReference>
<dbReference type="GO" id="GO:0004048">
    <property type="term" value="F:anthranilate phosphoribosyltransferase activity"/>
    <property type="evidence" value="ECO:0007669"/>
    <property type="project" value="UniProtKB-UniRule"/>
</dbReference>
<dbReference type="GO" id="GO:0000287">
    <property type="term" value="F:magnesium ion binding"/>
    <property type="evidence" value="ECO:0007669"/>
    <property type="project" value="UniProtKB-UniRule"/>
</dbReference>
<dbReference type="GO" id="GO:0000162">
    <property type="term" value="P:L-tryptophan biosynthetic process"/>
    <property type="evidence" value="ECO:0007669"/>
    <property type="project" value="UniProtKB-UniRule"/>
</dbReference>
<dbReference type="FunFam" id="1.20.970.10:FF:000006">
    <property type="entry name" value="Anthranilate phosphoribosyltransferase"/>
    <property type="match status" value="1"/>
</dbReference>
<dbReference type="FunFam" id="3.40.1030.10:FF:000002">
    <property type="entry name" value="Anthranilate phosphoribosyltransferase"/>
    <property type="match status" value="1"/>
</dbReference>
<dbReference type="Gene3D" id="3.40.1030.10">
    <property type="entry name" value="Nucleoside phosphorylase/phosphoribosyltransferase catalytic domain"/>
    <property type="match status" value="1"/>
</dbReference>
<dbReference type="Gene3D" id="1.20.970.10">
    <property type="entry name" value="Transferase, Pyrimidine Nucleoside Phosphorylase, Chain C"/>
    <property type="match status" value="1"/>
</dbReference>
<dbReference type="HAMAP" id="MF_00211">
    <property type="entry name" value="TrpD"/>
    <property type="match status" value="1"/>
</dbReference>
<dbReference type="InterPro" id="IPR005940">
    <property type="entry name" value="Anthranilate_Pribosyl_Tfrase"/>
</dbReference>
<dbReference type="InterPro" id="IPR000312">
    <property type="entry name" value="Glycosyl_Trfase_fam3"/>
</dbReference>
<dbReference type="InterPro" id="IPR017459">
    <property type="entry name" value="Glycosyl_Trfase_fam3_N_dom"/>
</dbReference>
<dbReference type="InterPro" id="IPR036320">
    <property type="entry name" value="Glycosyl_Trfase_fam3_N_dom_sf"/>
</dbReference>
<dbReference type="InterPro" id="IPR035902">
    <property type="entry name" value="Nuc_phospho_transferase"/>
</dbReference>
<dbReference type="NCBIfam" id="TIGR01245">
    <property type="entry name" value="trpD"/>
    <property type="match status" value="1"/>
</dbReference>
<dbReference type="PANTHER" id="PTHR43285">
    <property type="entry name" value="ANTHRANILATE PHOSPHORIBOSYLTRANSFERASE"/>
    <property type="match status" value="1"/>
</dbReference>
<dbReference type="PANTHER" id="PTHR43285:SF2">
    <property type="entry name" value="ANTHRANILATE PHOSPHORIBOSYLTRANSFERASE"/>
    <property type="match status" value="1"/>
</dbReference>
<dbReference type="Pfam" id="PF02885">
    <property type="entry name" value="Glycos_trans_3N"/>
    <property type="match status" value="1"/>
</dbReference>
<dbReference type="Pfam" id="PF00591">
    <property type="entry name" value="Glycos_transf_3"/>
    <property type="match status" value="1"/>
</dbReference>
<dbReference type="SUPFAM" id="SSF52418">
    <property type="entry name" value="Nucleoside phosphorylase/phosphoribosyltransferase catalytic domain"/>
    <property type="match status" value="1"/>
</dbReference>
<dbReference type="SUPFAM" id="SSF47648">
    <property type="entry name" value="Nucleoside phosphorylase/phosphoribosyltransferase N-terminal domain"/>
    <property type="match status" value="1"/>
</dbReference>
<sequence length="342" mass="36007">MPITAQQALQRTIEHREIFHDEMLHLMRMIMNGELSPAMTAAIITGLRVKKETIGEITAAAQVMREFSTKVQVPDRKHLVDIVGTGGDGASTFNISTCAMFVAAAAGAKVSKHGGRSVSSKSGSADVMEALGIHIHLAPEAIARCIAEVGIGFMFAPNHHPAMKNVAPVRKELGVRTIFNILGPLTNPAEAPHVLVGVFHPDLVGIQVRALQRLGAEHVLVVYGRDGMDEASLGAATLVGELKNGQISEYDIHPEDFGLAMTSNRALKVDTPEQSRDMLLGVLRGQPGAAHDTVCLNAGVALYAANVAESIAAGLALARAAIASGAALAKLEQLVARTHALA</sequence>
<proteinExistence type="inferred from homology"/>